<proteinExistence type="inferred from homology"/>
<protein>
    <recommendedName>
        <fullName>Protein MGF 360-18R</fullName>
    </recommendedName>
</protein>
<evidence type="ECO:0000250" key="1"/>
<evidence type="ECO:0000305" key="2"/>
<name>36018_ASFP4</name>
<reference key="1">
    <citation type="submission" date="2003-03" db="EMBL/GenBank/DDBJ databases">
        <title>African swine fever virus genomes.</title>
        <authorList>
            <person name="Kutish G.F."/>
            <person name="Rock D.L."/>
        </authorList>
    </citation>
    <scope>NUCLEOTIDE SEQUENCE [LARGE SCALE GENOMIC DNA]</scope>
</reference>
<sequence length="364" mass="42210">MPSPHSLQTLAKKILATQQISTDHYFILKYCGLWWHGAPIMLSTNEDNQLMIKSASFKEGLSLDLALMKVVQENNHDLIKLFTEWGADINSSFVTVNMECTRNLCRELGAKEALNERDILQIFYKTRDIKTSSHVILCHELLSNNPLFQNIERMRSIIYRSLEKLSINFILDDISFSEMLTRHWYGLAILYNLTEAIQYFYEKYKHFKNWRLICGLSFNNLSDLYEIYNLEKVDMNIDEMMYLACSIYDGNYSTIYYCFVLGADINQAMLTSVINHCIGNLFLCIDLGADAFEDSMELAKQKNDNIFISILSFKNYSPDSSLLSLKMTDPEKINALLDEEKYESKNMLMFDAHDEKTSTSPVRL</sequence>
<feature type="chain" id="PRO_0000373304" description="Protein MGF 360-18R">
    <location>
        <begin position="1"/>
        <end position="364"/>
    </location>
</feature>
<organism>
    <name type="scientific">African swine fever virus (isolate Tick/South Africa/Pretoriuskop Pr4/1996)</name>
    <name type="common">ASFV</name>
    <dbReference type="NCBI Taxonomy" id="561443"/>
    <lineage>
        <taxon>Viruses</taxon>
        <taxon>Varidnaviria</taxon>
        <taxon>Bamfordvirae</taxon>
        <taxon>Nucleocytoviricota</taxon>
        <taxon>Pokkesviricetes</taxon>
        <taxon>Asfuvirales</taxon>
        <taxon>Asfarviridae</taxon>
        <taxon>Asfivirus</taxon>
        <taxon>African swine fever virus</taxon>
    </lineage>
</organism>
<organismHost>
    <name type="scientific">Ornithodoros</name>
    <name type="common">relapsing fever ticks</name>
    <dbReference type="NCBI Taxonomy" id="6937"/>
</organismHost>
<organismHost>
    <name type="scientific">Phacochoerus aethiopicus</name>
    <name type="common">Warthog</name>
    <dbReference type="NCBI Taxonomy" id="85517"/>
</organismHost>
<organismHost>
    <name type="scientific">Phacochoerus africanus</name>
    <name type="common">Warthog</name>
    <dbReference type="NCBI Taxonomy" id="41426"/>
</organismHost>
<organismHost>
    <name type="scientific">Potamochoerus larvatus</name>
    <name type="common">Bushpig</name>
    <dbReference type="NCBI Taxonomy" id="273792"/>
</organismHost>
<organismHost>
    <name type="scientific">Sus scrofa</name>
    <name type="common">Pig</name>
    <dbReference type="NCBI Taxonomy" id="9823"/>
</organismHost>
<accession>P0C9R7</accession>
<dbReference type="EMBL" id="AY261363">
    <property type="status" value="NOT_ANNOTATED_CDS"/>
    <property type="molecule type" value="Genomic_DNA"/>
</dbReference>
<dbReference type="SMR" id="P0C9R7"/>
<dbReference type="Proteomes" id="UP000000859">
    <property type="component" value="Segment"/>
</dbReference>
<dbReference type="GO" id="GO:0042330">
    <property type="term" value="P:taxis"/>
    <property type="evidence" value="ECO:0007669"/>
    <property type="project" value="InterPro"/>
</dbReference>
<dbReference type="InterPro" id="IPR002595">
    <property type="entry name" value="ASFV_MGF360"/>
</dbReference>
<dbReference type="Pfam" id="PF01671">
    <property type="entry name" value="ASFV_360"/>
    <property type="match status" value="1"/>
</dbReference>
<comment type="function">
    <text evidence="1">Plays a role in virus cell tropism, and may be required for efficient virus replication in macrophages.</text>
</comment>
<comment type="similarity">
    <text evidence="2">Belongs to the asfivirus MGF 360 family.</text>
</comment>
<gene>
    <name type="ordered locus">Pret-171</name>
</gene>